<gene>
    <name type="primary">ipp1</name>
    <name type="ORF">AN2968</name>
</gene>
<proteinExistence type="evidence at protein level"/>
<sequence>MSYTVRKIGQPYTLEHRVYIEKDGQPVSPFHDIPLYANAEKTVLNMIVEIPRWTNAKQEISKEEFLNPIKQDTKKGKLRFVRNCFPHKGYLWNYGAFPQTWEDPNVVHPETKAKGDNDPLDVCEIGELVGYPGQVKQVKVLGVMALLDEEETDWKVIVIDVNDPLAPKLNDIEDVERHLPGLLRATNEWFRIYKIPDGKPENQFAFSGEAKNKKYAEEVIHECADAWEKLVSGKSDRGDISLANSTLGNSDSVDSSKLASIPRGENLPPAPIDGTIDKWFFISGAAV</sequence>
<accession>Q5B912</accession>
<accession>C8VJ06</accession>
<keyword id="KW-0963">Cytoplasm</keyword>
<keyword id="KW-0378">Hydrolase</keyword>
<keyword id="KW-0460">Magnesium</keyword>
<keyword id="KW-0479">Metal-binding</keyword>
<keyword id="KW-1185">Reference proteome</keyword>
<keyword id="KW-0346">Stress response</keyword>
<comment type="function">
    <text>Involved in osmoadaptation.</text>
</comment>
<comment type="catalytic activity">
    <reaction>
        <text>diphosphate + H2O = 2 phosphate + H(+)</text>
        <dbReference type="Rhea" id="RHEA:24576"/>
        <dbReference type="ChEBI" id="CHEBI:15377"/>
        <dbReference type="ChEBI" id="CHEBI:15378"/>
        <dbReference type="ChEBI" id="CHEBI:33019"/>
        <dbReference type="ChEBI" id="CHEBI:43474"/>
        <dbReference type="EC" id="3.6.1.1"/>
    </reaction>
</comment>
<comment type="cofactor">
    <cofactor evidence="1">
        <name>Mg(2+)</name>
        <dbReference type="ChEBI" id="CHEBI:18420"/>
    </cofactor>
</comment>
<comment type="subcellular location">
    <subcellularLocation>
        <location evidence="1">Cytoplasm</location>
    </subcellularLocation>
</comment>
<comment type="induction">
    <text evidence="3">Up-regulated when grown with elevated levels of potassium chloride.</text>
</comment>
<comment type="similarity">
    <text evidence="4">Belongs to the PPase family.</text>
</comment>
<comment type="sequence caution" evidence="4">
    <conflict type="erroneous gene model prediction">
        <sequence resource="EMBL-CDS" id="EAA63539"/>
    </conflict>
</comment>
<feature type="chain" id="PRO_0000348276" description="Inorganic pyrophosphatase">
    <location>
        <begin position="1"/>
        <end position="287"/>
    </location>
</feature>
<feature type="region of interest" description="Disordered" evidence="2">
    <location>
        <begin position="244"/>
        <end position="269"/>
    </location>
</feature>
<feature type="compositionally biased region" description="Polar residues" evidence="2">
    <location>
        <begin position="244"/>
        <end position="258"/>
    </location>
</feature>
<feature type="binding site" evidence="1">
    <location>
        <position position="79"/>
    </location>
    <ligand>
        <name>diphosphate</name>
        <dbReference type="ChEBI" id="CHEBI:33019"/>
    </ligand>
</feature>
<feature type="binding site" evidence="1">
    <location>
        <position position="116"/>
    </location>
    <ligand>
        <name>Mg(2+)</name>
        <dbReference type="ChEBI" id="CHEBI:18420"/>
        <label>1</label>
    </ligand>
</feature>
<feature type="binding site" evidence="1">
    <location>
        <position position="121"/>
    </location>
    <ligand>
        <name>Mg(2+)</name>
        <dbReference type="ChEBI" id="CHEBI:18420"/>
        <label>1</label>
    </ligand>
</feature>
<feature type="binding site" evidence="1">
    <location>
        <position position="121"/>
    </location>
    <ligand>
        <name>Mg(2+)</name>
        <dbReference type="ChEBI" id="CHEBI:18420"/>
        <label>2</label>
    </ligand>
</feature>
<feature type="binding site" evidence="1">
    <location>
        <position position="153"/>
    </location>
    <ligand>
        <name>Mg(2+)</name>
        <dbReference type="ChEBI" id="CHEBI:18420"/>
        <label>1</label>
    </ligand>
</feature>
<name>IPYR_EMENI</name>
<dbReference type="EC" id="3.6.1.1"/>
<dbReference type="EMBL" id="AACD01000051">
    <property type="protein sequence ID" value="EAA63539.1"/>
    <property type="status" value="ALT_SEQ"/>
    <property type="molecule type" value="Genomic_DNA"/>
</dbReference>
<dbReference type="EMBL" id="BN001306">
    <property type="protein sequence ID" value="CBF83648.1"/>
    <property type="molecule type" value="Genomic_DNA"/>
</dbReference>
<dbReference type="RefSeq" id="XP_660572.1">
    <property type="nucleotide sequence ID" value="XM_655480.1"/>
</dbReference>
<dbReference type="SMR" id="Q5B912"/>
<dbReference type="FunCoup" id="Q5B912">
    <property type="interactions" value="990"/>
</dbReference>
<dbReference type="STRING" id="227321.Q5B912"/>
<dbReference type="EnsemblFungi" id="CBF83648">
    <property type="protein sequence ID" value="CBF83648"/>
    <property type="gene ID" value="ANIA_02968"/>
</dbReference>
<dbReference type="KEGG" id="ani:ANIA_02968"/>
<dbReference type="VEuPathDB" id="FungiDB:AN2968"/>
<dbReference type="eggNOG" id="KOG1626">
    <property type="taxonomic scope" value="Eukaryota"/>
</dbReference>
<dbReference type="HOGENOM" id="CLU_040684_0_1_1"/>
<dbReference type="InParanoid" id="Q5B912"/>
<dbReference type="OMA" id="LYANEQK"/>
<dbReference type="OrthoDB" id="1608002at2759"/>
<dbReference type="Proteomes" id="UP000000560">
    <property type="component" value="Chromosome VI"/>
</dbReference>
<dbReference type="GO" id="GO:0005737">
    <property type="term" value="C:cytoplasm"/>
    <property type="evidence" value="ECO:0007669"/>
    <property type="project" value="UniProtKB-SubCell"/>
</dbReference>
<dbReference type="GO" id="GO:0005576">
    <property type="term" value="C:extracellular region"/>
    <property type="evidence" value="ECO:0000314"/>
    <property type="project" value="AspGD"/>
</dbReference>
<dbReference type="GO" id="GO:0004427">
    <property type="term" value="F:inorganic diphosphate phosphatase activity"/>
    <property type="evidence" value="ECO:0000318"/>
    <property type="project" value="GO_Central"/>
</dbReference>
<dbReference type="GO" id="GO:0000287">
    <property type="term" value="F:magnesium ion binding"/>
    <property type="evidence" value="ECO:0007669"/>
    <property type="project" value="InterPro"/>
</dbReference>
<dbReference type="GO" id="GO:0071470">
    <property type="term" value="P:cellular response to osmotic stress"/>
    <property type="evidence" value="ECO:0000270"/>
    <property type="project" value="AspGD"/>
</dbReference>
<dbReference type="GO" id="GO:0006796">
    <property type="term" value="P:phosphate-containing compound metabolic process"/>
    <property type="evidence" value="ECO:0000318"/>
    <property type="project" value="GO_Central"/>
</dbReference>
<dbReference type="CDD" id="cd00412">
    <property type="entry name" value="pyrophosphatase"/>
    <property type="match status" value="1"/>
</dbReference>
<dbReference type="FunFam" id="3.90.80.10:FF:000004">
    <property type="entry name" value="Inorganic pyrophosphatase"/>
    <property type="match status" value="1"/>
</dbReference>
<dbReference type="Gene3D" id="3.90.80.10">
    <property type="entry name" value="Inorganic pyrophosphatase"/>
    <property type="match status" value="1"/>
</dbReference>
<dbReference type="InterPro" id="IPR008162">
    <property type="entry name" value="Pyrophosphatase"/>
</dbReference>
<dbReference type="InterPro" id="IPR036649">
    <property type="entry name" value="Pyrophosphatase_sf"/>
</dbReference>
<dbReference type="PANTHER" id="PTHR10286">
    <property type="entry name" value="INORGANIC PYROPHOSPHATASE"/>
    <property type="match status" value="1"/>
</dbReference>
<dbReference type="Pfam" id="PF00719">
    <property type="entry name" value="Pyrophosphatase"/>
    <property type="match status" value="1"/>
</dbReference>
<dbReference type="SUPFAM" id="SSF50324">
    <property type="entry name" value="Inorganic pyrophosphatase"/>
    <property type="match status" value="1"/>
</dbReference>
<dbReference type="PROSITE" id="PS00387">
    <property type="entry name" value="PPASE"/>
    <property type="match status" value="1"/>
</dbReference>
<reference key="1">
    <citation type="journal article" date="2005" name="Nature">
        <title>Sequencing of Aspergillus nidulans and comparative analysis with A. fumigatus and A. oryzae.</title>
        <authorList>
            <person name="Galagan J.E."/>
            <person name="Calvo S.E."/>
            <person name="Cuomo C."/>
            <person name="Ma L.-J."/>
            <person name="Wortman J.R."/>
            <person name="Batzoglou S."/>
            <person name="Lee S.-I."/>
            <person name="Bastuerkmen M."/>
            <person name="Spevak C.C."/>
            <person name="Clutterbuck J."/>
            <person name="Kapitonov V."/>
            <person name="Jurka J."/>
            <person name="Scazzocchio C."/>
            <person name="Farman M.L."/>
            <person name="Butler J."/>
            <person name="Purcell S."/>
            <person name="Harris S."/>
            <person name="Braus G.H."/>
            <person name="Draht O."/>
            <person name="Busch S."/>
            <person name="D'Enfert C."/>
            <person name="Bouchier C."/>
            <person name="Goldman G.H."/>
            <person name="Bell-Pedersen D."/>
            <person name="Griffiths-Jones S."/>
            <person name="Doonan J.H."/>
            <person name="Yu J."/>
            <person name="Vienken K."/>
            <person name="Pain A."/>
            <person name="Freitag M."/>
            <person name="Selker E.U."/>
            <person name="Archer D.B."/>
            <person name="Penalva M.A."/>
            <person name="Oakley B.R."/>
            <person name="Momany M."/>
            <person name="Tanaka T."/>
            <person name="Kumagai T."/>
            <person name="Asai K."/>
            <person name="Machida M."/>
            <person name="Nierman W.C."/>
            <person name="Denning D.W."/>
            <person name="Caddick M.X."/>
            <person name="Hynes M."/>
            <person name="Paoletti M."/>
            <person name="Fischer R."/>
            <person name="Miller B.L."/>
            <person name="Dyer P.S."/>
            <person name="Sachs M.S."/>
            <person name="Osmani S.A."/>
            <person name="Birren B.W."/>
        </authorList>
    </citation>
    <scope>NUCLEOTIDE SEQUENCE [LARGE SCALE GENOMIC DNA]</scope>
    <source>
        <strain>FGSC A4 / ATCC 38163 / CBS 112.46 / NRRL 194 / M139</strain>
    </source>
</reference>
<reference key="2">
    <citation type="journal article" date="2009" name="Fungal Genet. Biol.">
        <title>The 2008 update of the Aspergillus nidulans genome annotation: a community effort.</title>
        <authorList>
            <person name="Wortman J.R."/>
            <person name="Gilsenan J.M."/>
            <person name="Joardar V."/>
            <person name="Deegan J."/>
            <person name="Clutterbuck J."/>
            <person name="Andersen M.R."/>
            <person name="Archer D."/>
            <person name="Bencina M."/>
            <person name="Braus G."/>
            <person name="Coutinho P."/>
            <person name="von Dohren H."/>
            <person name="Doonan J."/>
            <person name="Driessen A.J."/>
            <person name="Durek P."/>
            <person name="Espeso E."/>
            <person name="Fekete E."/>
            <person name="Flipphi M."/>
            <person name="Estrada C.G."/>
            <person name="Geysens S."/>
            <person name="Goldman G."/>
            <person name="de Groot P.W."/>
            <person name="Hansen K."/>
            <person name="Harris S.D."/>
            <person name="Heinekamp T."/>
            <person name="Helmstaedt K."/>
            <person name="Henrissat B."/>
            <person name="Hofmann G."/>
            <person name="Homan T."/>
            <person name="Horio T."/>
            <person name="Horiuchi H."/>
            <person name="James S."/>
            <person name="Jones M."/>
            <person name="Karaffa L."/>
            <person name="Karanyi Z."/>
            <person name="Kato M."/>
            <person name="Keller N."/>
            <person name="Kelly D.E."/>
            <person name="Kiel J.A."/>
            <person name="Kim J.M."/>
            <person name="van der Klei I.J."/>
            <person name="Klis F.M."/>
            <person name="Kovalchuk A."/>
            <person name="Krasevec N."/>
            <person name="Kubicek C.P."/>
            <person name="Liu B."/>
            <person name="Maccabe A."/>
            <person name="Meyer V."/>
            <person name="Mirabito P."/>
            <person name="Miskei M."/>
            <person name="Mos M."/>
            <person name="Mullins J."/>
            <person name="Nelson D.R."/>
            <person name="Nielsen J."/>
            <person name="Oakley B.R."/>
            <person name="Osmani S.A."/>
            <person name="Pakula T."/>
            <person name="Paszewski A."/>
            <person name="Paulsen I."/>
            <person name="Pilsyk S."/>
            <person name="Pocsi I."/>
            <person name="Punt P.J."/>
            <person name="Ram A.F."/>
            <person name="Ren Q."/>
            <person name="Robellet X."/>
            <person name="Robson G."/>
            <person name="Seiboth B."/>
            <person name="van Solingen P."/>
            <person name="Specht T."/>
            <person name="Sun J."/>
            <person name="Taheri-Talesh N."/>
            <person name="Takeshita N."/>
            <person name="Ussery D."/>
            <person name="vanKuyk P.A."/>
            <person name="Visser H."/>
            <person name="van de Vondervoort P.J."/>
            <person name="de Vries R.P."/>
            <person name="Walton J."/>
            <person name="Xiang X."/>
            <person name="Xiong Y."/>
            <person name="Zeng A.P."/>
            <person name="Brandt B.W."/>
            <person name="Cornell M.J."/>
            <person name="van den Hondel C.A."/>
            <person name="Visser J."/>
            <person name="Oliver S.G."/>
            <person name="Turner G."/>
        </authorList>
    </citation>
    <scope>GENOME REANNOTATION</scope>
    <source>
        <strain>FGSC A4 / ATCC 38163 / CBS 112.46 / NRRL 194 / M139</strain>
    </source>
</reference>
<reference key="3">
    <citation type="journal article" date="2007" name="Fungal Genet. Biol.">
        <title>Proteome map of Aspergillus nidulans during osmoadaptation.</title>
        <authorList>
            <person name="Kim Y."/>
            <person name="Nandakumar M.P."/>
            <person name="Marten M.R."/>
        </authorList>
    </citation>
    <scope>INDUCTION</scope>
    <scope>IDENTIFICATION BY MASS SPECTROMETRY</scope>
</reference>
<protein>
    <recommendedName>
        <fullName>Inorganic pyrophosphatase</fullName>
        <ecNumber>3.6.1.1</ecNumber>
    </recommendedName>
    <alternativeName>
        <fullName>Pyrophosphate phospho-hydrolase</fullName>
        <shortName>PPase</shortName>
    </alternativeName>
</protein>
<evidence type="ECO:0000250" key="1"/>
<evidence type="ECO:0000256" key="2">
    <source>
        <dbReference type="SAM" id="MobiDB-lite"/>
    </source>
</evidence>
<evidence type="ECO:0000269" key="3">
    <source>
    </source>
</evidence>
<evidence type="ECO:0000305" key="4"/>
<organism>
    <name type="scientific">Emericella nidulans (strain FGSC A4 / ATCC 38163 / CBS 112.46 / NRRL 194 / M139)</name>
    <name type="common">Aspergillus nidulans</name>
    <dbReference type="NCBI Taxonomy" id="227321"/>
    <lineage>
        <taxon>Eukaryota</taxon>
        <taxon>Fungi</taxon>
        <taxon>Dikarya</taxon>
        <taxon>Ascomycota</taxon>
        <taxon>Pezizomycotina</taxon>
        <taxon>Eurotiomycetes</taxon>
        <taxon>Eurotiomycetidae</taxon>
        <taxon>Eurotiales</taxon>
        <taxon>Aspergillaceae</taxon>
        <taxon>Aspergillus</taxon>
        <taxon>Aspergillus subgen. Nidulantes</taxon>
    </lineage>
</organism>